<feature type="chain" id="PRO_0000238299" description="ATP synthase subunit alpha">
    <location>
        <begin position="1"/>
        <end position="515"/>
    </location>
</feature>
<feature type="binding site" evidence="1">
    <location>
        <begin position="169"/>
        <end position="176"/>
    </location>
    <ligand>
        <name>ATP</name>
        <dbReference type="ChEBI" id="CHEBI:30616"/>
    </ligand>
</feature>
<feature type="site" description="Required for activity" evidence="1">
    <location>
        <position position="373"/>
    </location>
</feature>
<comment type="function">
    <text evidence="1">Produces ATP from ADP in the presence of a proton gradient across the membrane. The alpha chain is a regulatory subunit.</text>
</comment>
<comment type="catalytic activity">
    <reaction evidence="1">
        <text>ATP + H2O + 4 H(+)(in) = ADP + phosphate + 5 H(+)(out)</text>
        <dbReference type="Rhea" id="RHEA:57720"/>
        <dbReference type="ChEBI" id="CHEBI:15377"/>
        <dbReference type="ChEBI" id="CHEBI:15378"/>
        <dbReference type="ChEBI" id="CHEBI:30616"/>
        <dbReference type="ChEBI" id="CHEBI:43474"/>
        <dbReference type="ChEBI" id="CHEBI:456216"/>
        <dbReference type="EC" id="7.1.2.2"/>
    </reaction>
</comment>
<comment type="subunit">
    <text evidence="1">F-type ATPases have 2 components, CF(1) - the catalytic core - and CF(0) - the membrane proton channel. CF(1) has five subunits: alpha(3), beta(3), gamma(1), delta(1), epsilon(1). CF(0) has three main subunits: a(1), b(2) and c(9-12). The alpha and beta chains form an alternating ring which encloses part of the gamma chain. CF(1) is attached to CF(0) by a central stalk formed by the gamma and epsilon chains, while a peripheral stalk is formed by the delta and b chains.</text>
</comment>
<comment type="subcellular location">
    <subcellularLocation>
        <location evidence="1">Cell inner membrane</location>
        <topology evidence="1">Peripheral membrane protein</topology>
    </subcellularLocation>
</comment>
<comment type="similarity">
    <text evidence="1">Belongs to the ATPase alpha/beta chains family.</text>
</comment>
<proteinExistence type="inferred from homology"/>
<name>ATPA_NEIG1</name>
<accession>Q5F4Z2</accession>
<reference key="1">
    <citation type="submission" date="2003-03" db="EMBL/GenBank/DDBJ databases">
        <title>The complete genome sequence of Neisseria gonorrhoeae.</title>
        <authorList>
            <person name="Lewis L.A."/>
            <person name="Gillaspy A.F."/>
            <person name="McLaughlin R.E."/>
            <person name="Gipson M."/>
            <person name="Ducey T.F."/>
            <person name="Ownbey T."/>
            <person name="Hartman K."/>
            <person name="Nydick C."/>
            <person name="Carson M.B."/>
            <person name="Vaughn J."/>
            <person name="Thomson C."/>
            <person name="Song L."/>
            <person name="Lin S."/>
            <person name="Yuan X."/>
            <person name="Najar F."/>
            <person name="Zhan M."/>
            <person name="Ren Q."/>
            <person name="Zhu H."/>
            <person name="Qi S."/>
            <person name="Kenton S.M."/>
            <person name="Lai H."/>
            <person name="White J.D."/>
            <person name="Clifton S."/>
            <person name="Roe B.A."/>
            <person name="Dyer D.W."/>
        </authorList>
    </citation>
    <scope>NUCLEOTIDE SEQUENCE [LARGE SCALE GENOMIC DNA]</scope>
    <source>
        <strain>ATCC 700825 / FA 1090</strain>
    </source>
</reference>
<protein>
    <recommendedName>
        <fullName evidence="1">ATP synthase subunit alpha</fullName>
        <ecNumber evidence="1">7.1.2.2</ecNumber>
    </recommendedName>
    <alternativeName>
        <fullName evidence="1">ATP synthase F1 sector subunit alpha</fullName>
    </alternativeName>
    <alternativeName>
        <fullName evidence="1">F-ATPase subunit alpha</fullName>
    </alternativeName>
</protein>
<dbReference type="EC" id="7.1.2.2" evidence="1"/>
<dbReference type="EMBL" id="AE004969">
    <property type="protein sequence ID" value="AAW90745.1"/>
    <property type="molecule type" value="Genomic_DNA"/>
</dbReference>
<dbReference type="RefSeq" id="WP_003687154.1">
    <property type="nucleotide sequence ID" value="NC_002946.2"/>
</dbReference>
<dbReference type="RefSeq" id="YP_209157.1">
    <property type="nucleotide sequence ID" value="NC_002946.2"/>
</dbReference>
<dbReference type="SMR" id="Q5F4Z2"/>
<dbReference type="STRING" id="242231.NGO_2148"/>
<dbReference type="GeneID" id="66754477"/>
<dbReference type="KEGG" id="ngo:NGO_2148"/>
<dbReference type="PATRIC" id="fig|242231.10.peg.2597"/>
<dbReference type="HOGENOM" id="CLU_010091_2_1_4"/>
<dbReference type="Proteomes" id="UP000000535">
    <property type="component" value="Chromosome"/>
</dbReference>
<dbReference type="GO" id="GO:0005886">
    <property type="term" value="C:plasma membrane"/>
    <property type="evidence" value="ECO:0007669"/>
    <property type="project" value="UniProtKB-SubCell"/>
</dbReference>
<dbReference type="GO" id="GO:0045259">
    <property type="term" value="C:proton-transporting ATP synthase complex"/>
    <property type="evidence" value="ECO:0007669"/>
    <property type="project" value="UniProtKB-KW"/>
</dbReference>
<dbReference type="GO" id="GO:0043531">
    <property type="term" value="F:ADP binding"/>
    <property type="evidence" value="ECO:0007669"/>
    <property type="project" value="TreeGrafter"/>
</dbReference>
<dbReference type="GO" id="GO:0005524">
    <property type="term" value="F:ATP binding"/>
    <property type="evidence" value="ECO:0007669"/>
    <property type="project" value="UniProtKB-UniRule"/>
</dbReference>
<dbReference type="GO" id="GO:0046933">
    <property type="term" value="F:proton-transporting ATP synthase activity, rotational mechanism"/>
    <property type="evidence" value="ECO:0007669"/>
    <property type="project" value="UniProtKB-UniRule"/>
</dbReference>
<dbReference type="CDD" id="cd18113">
    <property type="entry name" value="ATP-synt_F1_alpha_C"/>
    <property type="match status" value="1"/>
</dbReference>
<dbReference type="CDD" id="cd18116">
    <property type="entry name" value="ATP-synt_F1_alpha_N"/>
    <property type="match status" value="1"/>
</dbReference>
<dbReference type="CDD" id="cd01132">
    <property type="entry name" value="F1-ATPase_alpha_CD"/>
    <property type="match status" value="1"/>
</dbReference>
<dbReference type="FunFam" id="1.20.150.20:FF:000001">
    <property type="entry name" value="ATP synthase subunit alpha"/>
    <property type="match status" value="1"/>
</dbReference>
<dbReference type="FunFam" id="2.40.30.20:FF:000001">
    <property type="entry name" value="ATP synthase subunit alpha"/>
    <property type="match status" value="1"/>
</dbReference>
<dbReference type="FunFam" id="3.40.50.300:FF:000002">
    <property type="entry name" value="ATP synthase subunit alpha"/>
    <property type="match status" value="1"/>
</dbReference>
<dbReference type="Gene3D" id="2.40.30.20">
    <property type="match status" value="1"/>
</dbReference>
<dbReference type="Gene3D" id="1.20.150.20">
    <property type="entry name" value="ATP synthase alpha/beta chain, C-terminal domain"/>
    <property type="match status" value="1"/>
</dbReference>
<dbReference type="Gene3D" id="3.40.50.300">
    <property type="entry name" value="P-loop containing nucleotide triphosphate hydrolases"/>
    <property type="match status" value="1"/>
</dbReference>
<dbReference type="HAMAP" id="MF_01346">
    <property type="entry name" value="ATP_synth_alpha_bact"/>
    <property type="match status" value="1"/>
</dbReference>
<dbReference type="InterPro" id="IPR023366">
    <property type="entry name" value="ATP_synth_asu-like_sf"/>
</dbReference>
<dbReference type="InterPro" id="IPR000793">
    <property type="entry name" value="ATP_synth_asu_C"/>
</dbReference>
<dbReference type="InterPro" id="IPR038376">
    <property type="entry name" value="ATP_synth_asu_C_sf"/>
</dbReference>
<dbReference type="InterPro" id="IPR033732">
    <property type="entry name" value="ATP_synth_F1_a_nt-bd_dom"/>
</dbReference>
<dbReference type="InterPro" id="IPR005294">
    <property type="entry name" value="ATP_synth_F1_asu"/>
</dbReference>
<dbReference type="InterPro" id="IPR020003">
    <property type="entry name" value="ATPase_a/bsu_AS"/>
</dbReference>
<dbReference type="InterPro" id="IPR004100">
    <property type="entry name" value="ATPase_F1/V1/A1_a/bsu_N"/>
</dbReference>
<dbReference type="InterPro" id="IPR036121">
    <property type="entry name" value="ATPase_F1/V1/A1_a/bsu_N_sf"/>
</dbReference>
<dbReference type="InterPro" id="IPR000194">
    <property type="entry name" value="ATPase_F1/V1/A1_a/bsu_nucl-bd"/>
</dbReference>
<dbReference type="InterPro" id="IPR027417">
    <property type="entry name" value="P-loop_NTPase"/>
</dbReference>
<dbReference type="NCBIfam" id="TIGR00962">
    <property type="entry name" value="atpA"/>
    <property type="match status" value="1"/>
</dbReference>
<dbReference type="NCBIfam" id="NF009884">
    <property type="entry name" value="PRK13343.1"/>
    <property type="match status" value="1"/>
</dbReference>
<dbReference type="PANTHER" id="PTHR48082">
    <property type="entry name" value="ATP SYNTHASE SUBUNIT ALPHA, MITOCHONDRIAL"/>
    <property type="match status" value="1"/>
</dbReference>
<dbReference type="PANTHER" id="PTHR48082:SF2">
    <property type="entry name" value="ATP SYNTHASE SUBUNIT ALPHA, MITOCHONDRIAL"/>
    <property type="match status" value="1"/>
</dbReference>
<dbReference type="Pfam" id="PF00006">
    <property type="entry name" value="ATP-synt_ab"/>
    <property type="match status" value="1"/>
</dbReference>
<dbReference type="Pfam" id="PF00306">
    <property type="entry name" value="ATP-synt_ab_C"/>
    <property type="match status" value="1"/>
</dbReference>
<dbReference type="Pfam" id="PF02874">
    <property type="entry name" value="ATP-synt_ab_N"/>
    <property type="match status" value="1"/>
</dbReference>
<dbReference type="PIRSF" id="PIRSF039088">
    <property type="entry name" value="F_ATPase_subunit_alpha"/>
    <property type="match status" value="1"/>
</dbReference>
<dbReference type="SUPFAM" id="SSF47917">
    <property type="entry name" value="C-terminal domain of alpha and beta subunits of F1 ATP synthase"/>
    <property type="match status" value="1"/>
</dbReference>
<dbReference type="SUPFAM" id="SSF50615">
    <property type="entry name" value="N-terminal domain of alpha and beta subunits of F1 ATP synthase"/>
    <property type="match status" value="1"/>
</dbReference>
<dbReference type="SUPFAM" id="SSF52540">
    <property type="entry name" value="P-loop containing nucleoside triphosphate hydrolases"/>
    <property type="match status" value="1"/>
</dbReference>
<dbReference type="PROSITE" id="PS00152">
    <property type="entry name" value="ATPASE_ALPHA_BETA"/>
    <property type="match status" value="1"/>
</dbReference>
<evidence type="ECO:0000255" key="1">
    <source>
        <dbReference type="HAMAP-Rule" id="MF_01346"/>
    </source>
</evidence>
<gene>
    <name evidence="1" type="primary">atpA</name>
    <name type="ordered locus">NGO_2148</name>
</gene>
<organism>
    <name type="scientific">Neisseria gonorrhoeae (strain ATCC 700825 / FA 1090)</name>
    <dbReference type="NCBI Taxonomy" id="242231"/>
    <lineage>
        <taxon>Bacteria</taxon>
        <taxon>Pseudomonadati</taxon>
        <taxon>Pseudomonadota</taxon>
        <taxon>Betaproteobacteria</taxon>
        <taxon>Neisseriales</taxon>
        <taxon>Neisseriaceae</taxon>
        <taxon>Neisseria</taxon>
    </lineage>
</organism>
<keyword id="KW-0066">ATP synthesis</keyword>
<keyword id="KW-0067">ATP-binding</keyword>
<keyword id="KW-0997">Cell inner membrane</keyword>
<keyword id="KW-1003">Cell membrane</keyword>
<keyword id="KW-0139">CF(1)</keyword>
<keyword id="KW-0375">Hydrogen ion transport</keyword>
<keyword id="KW-0406">Ion transport</keyword>
<keyword id="KW-0472">Membrane</keyword>
<keyword id="KW-0547">Nucleotide-binding</keyword>
<keyword id="KW-1185">Reference proteome</keyword>
<keyword id="KW-1278">Translocase</keyword>
<keyword id="KW-0813">Transport</keyword>
<sequence length="515" mass="55241">MQLNPAEISDLIKAKIENLSVNAEVSTRGTVISVTDGIVRIHGLSDAMQGEMLEFPGNTLGLAMNLERDSVGAVVLGEYEHIKEGDTVTCTGRILEVPVGRELVGRVVDALGRPIDGKGPINTTLTAPVEKIAPGVIARKSVDQPMQTGLKAIDSMIPVGRGQRELIIGDRQTGKTAVALDAIVNQKGTGVICIYVAIGQKASSIANVVRKLEEHGAMEHTIVVAATASEAAALQYIAPYSGCTMGEFFRDRGEDALIVYDDLSKQAVAYRQISLLLRRPPGREAYPGDVFYLHSRLLERAARVNEHEVEKLTNGEVKGKTGSLTALPIIETQAGDVSAFVPTNVISITDGQIFLETDLFNAGIRPAINAGISVSRVGGAAQTKVIKKLGGGIRLALAQYRELAAFSQFASDLDEATRKQLEHGEVVTELMKQKQFSTLNTAEMALTLWAINNGSYSDVPVAKALAFESEFLSFVRTQHPEVLEAVNASGAMSDESEKTLEAAMKSFKSSYAYQA</sequence>